<reference key="1">
    <citation type="journal article" date="1994" name="Endocrinology">
        <title>The LIM domain homeobox gene isl-1: conservation of human, hamster, and rat complementary deoxyribonucleic acid sequences and expression in cell types of nonneuroendocrine lineage.</title>
        <authorList>
            <person name="Wang M."/>
            <person name="Drucker D.J."/>
        </authorList>
    </citation>
    <scope>NUCLEOTIDE SEQUENCE [MRNA]</scope>
    <scope>TISSUE SPECIFICITY</scope>
</reference>
<reference key="2">
    <citation type="journal article" date="1994" name="Diabetes">
        <title>Isolation of the human LIM/homeodomain gene islet-1 and identification of a simple sequence repeat polymorphism.</title>
        <authorList>
            <person name="Tanizawa Y."/>
            <person name="Riggs A.C."/>
            <person name="Dagogo-Jack S."/>
            <person name="Vaxillaire M."/>
            <person name="Froguel P."/>
            <person name="Liu L."/>
            <person name="Donis-Keller H."/>
            <person name="Permutt M.A."/>
        </authorList>
    </citation>
    <scope>NUCLEOTIDE SEQUENCE [MRNA] OF 4-349</scope>
    <source>
        <tissue>Pancreatic islet</tissue>
    </source>
</reference>
<reference key="3">
    <citation type="journal article" date="1994" name="Diabetes">
        <authorList>
            <person name="Tanizawa Y."/>
            <person name="Riggs A.C."/>
            <person name="Dagogo-Jack S."/>
            <person name="Vaxillaire M."/>
            <person name="Froguel P."/>
            <person name="Liu L."/>
            <person name="Donis-Keller H."/>
            <person name="Permutt M.A."/>
        </authorList>
    </citation>
    <scope>ERRATUM OF PUBMED:7912209</scope>
</reference>
<reference key="4">
    <citation type="journal article" date="2004" name="Genome Res.">
        <title>The status, quality, and expansion of the NIH full-length cDNA project: the Mammalian Gene Collection (MGC).</title>
        <authorList>
            <consortium name="The MGC Project Team"/>
        </authorList>
    </citation>
    <scope>NUCLEOTIDE SEQUENCE [LARGE SCALE MRNA]</scope>
    <source>
        <tissue>Testis</tissue>
    </source>
</reference>
<reference key="5">
    <citation type="journal article" date="2008" name="J. Proteome Res.">
        <title>Phosphoproteome of resting human platelets.</title>
        <authorList>
            <person name="Zahedi R.P."/>
            <person name="Lewandrowski U."/>
            <person name="Wiesner J."/>
            <person name="Wortelkamp S."/>
            <person name="Moebius J."/>
            <person name="Schuetz C."/>
            <person name="Walter U."/>
            <person name="Gambaryan S."/>
            <person name="Sickmann A."/>
        </authorList>
    </citation>
    <scope>IDENTIFICATION BY MASS SPECTROMETRY [LARGE SCALE ANALYSIS]</scope>
    <source>
        <tissue>Platelet</tissue>
    </source>
</reference>
<reference key="6">
    <citation type="journal article" date="2011" name="Circulation">
        <title>Formation of the building plan of the human heart: morphogenesis, growth, and differentiation.</title>
        <authorList>
            <person name="Sizarov A."/>
            <person name="Ya J."/>
            <person name="de Boer B.A."/>
            <person name="Lamers W.H."/>
            <person name="Christoffels V.M."/>
            <person name="Moorman A.F."/>
        </authorList>
    </citation>
    <scope>DEVELOPMENTAL STAGE</scope>
</reference>
<keyword id="KW-0010">Activator</keyword>
<keyword id="KW-0217">Developmental protein</keyword>
<keyword id="KW-0221">Differentiation</keyword>
<keyword id="KW-0238">DNA-binding</keyword>
<keyword id="KW-0371">Homeobox</keyword>
<keyword id="KW-0440">LIM domain</keyword>
<keyword id="KW-0479">Metal-binding</keyword>
<keyword id="KW-0539">Nucleus</keyword>
<keyword id="KW-0597">Phosphoprotein</keyword>
<keyword id="KW-1267">Proteomics identification</keyword>
<keyword id="KW-1185">Reference proteome</keyword>
<keyword id="KW-0677">Repeat</keyword>
<keyword id="KW-0804">Transcription</keyword>
<keyword id="KW-0805">Transcription regulation</keyword>
<keyword id="KW-0832">Ubl conjugation</keyword>
<keyword id="KW-0862">Zinc</keyword>
<accession>P61371</accession>
<accession>P20663</accession>
<accession>P47894</accession>
<feature type="chain" id="PRO_0000075746" description="Insulin gene enhancer protein ISL-1">
    <location>
        <begin position="1"/>
        <end position="349"/>
    </location>
</feature>
<feature type="domain" description="LIM zinc-binding 1" evidence="5">
    <location>
        <begin position="17"/>
        <end position="70"/>
    </location>
</feature>
<feature type="domain" description="LIM zinc-binding 2" evidence="5">
    <location>
        <begin position="79"/>
        <end position="133"/>
    </location>
</feature>
<feature type="DNA-binding region" description="Homeobox" evidence="4">
    <location>
        <begin position="181"/>
        <end position="240"/>
    </location>
</feature>
<feature type="region of interest" description="LIM-binding domain (LID)" evidence="1">
    <location>
        <begin position="262"/>
        <end position="291"/>
    </location>
</feature>
<feature type="region of interest" description="Disordered" evidence="6">
    <location>
        <begin position="312"/>
        <end position="349"/>
    </location>
</feature>
<feature type="compositionally biased region" description="Polar residues" evidence="6">
    <location>
        <begin position="321"/>
        <end position="343"/>
    </location>
</feature>
<name>ISL1_HUMAN</name>
<evidence type="ECO:0000250" key="1"/>
<evidence type="ECO:0000250" key="2">
    <source>
        <dbReference type="UniProtKB" id="P61372"/>
    </source>
</evidence>
<evidence type="ECO:0000250" key="3">
    <source>
        <dbReference type="UniProtKB" id="P61374"/>
    </source>
</evidence>
<evidence type="ECO:0000255" key="4">
    <source>
        <dbReference type="PROSITE-ProRule" id="PRU00108"/>
    </source>
</evidence>
<evidence type="ECO:0000255" key="5">
    <source>
        <dbReference type="PROSITE-ProRule" id="PRU00125"/>
    </source>
</evidence>
<evidence type="ECO:0000256" key="6">
    <source>
        <dbReference type="SAM" id="MobiDB-lite"/>
    </source>
</evidence>
<evidence type="ECO:0000269" key="7">
    <source>
    </source>
</evidence>
<evidence type="ECO:0000269" key="8">
    <source>
    </source>
</evidence>
<organism>
    <name type="scientific">Homo sapiens</name>
    <name type="common">Human</name>
    <dbReference type="NCBI Taxonomy" id="9606"/>
    <lineage>
        <taxon>Eukaryota</taxon>
        <taxon>Metazoa</taxon>
        <taxon>Chordata</taxon>
        <taxon>Craniata</taxon>
        <taxon>Vertebrata</taxon>
        <taxon>Euteleostomi</taxon>
        <taxon>Mammalia</taxon>
        <taxon>Eutheria</taxon>
        <taxon>Euarchontoglires</taxon>
        <taxon>Primates</taxon>
        <taxon>Haplorrhini</taxon>
        <taxon>Catarrhini</taxon>
        <taxon>Hominidae</taxon>
        <taxon>Homo</taxon>
    </lineage>
</organism>
<protein>
    <recommendedName>
        <fullName>Insulin gene enhancer protein ISL-1</fullName>
        <shortName>Islet-1</shortName>
    </recommendedName>
</protein>
<gene>
    <name type="primary">ISL1</name>
</gene>
<comment type="function">
    <text evidence="2 3">DNA-binding transcriptional activator. Recognizes and binds to the consensus octamer binding site 5'-ATAATTAA-3' in promoter of target genes. Plays a fundamental role in the gene regulatory network essential for retinal ganglion cell (RGC) differentiation. Cooperates with the transcription factor POU4F2 to achieve maximal levels of expression of RGC target genes and RGC fate specification in the developing retina. Involved in the specification of motor neurons in cooperation with LHX3 and LDB1 (By similarity). Binds to insulin gene enhancer sequences (By similarity). Essential for heart development. Marker of one progenitor cell population that give rise to the outflow tract, right ventricle, a subset of left ventricular cells, and a large number of atrial cells as well, its function is required for these progenitors to contribute to the heart. Controls the expression of FGF and BMP growth factors in this cell population and is required for proliferation and survival of cells within pharyngeal foregut endoderm and adjacent splanchnic mesoderm as well as for migration of cardiac progenitors into the heart (By similarity).</text>
</comment>
<comment type="subunit">
    <text evidence="2">At neuronal promoters, displaces LDB1 from LHX3 LIM domain to form a ternary complex in which ISL1 contacts both LHX3 and LDB1; allosteric structural changes in the DNA binding domain of LHX3, induced by the ISL1:LHX3 interaction, may explain differences in sequence specificity of the different complexes. Interacts with LHX3. Interacts (via C-terminus) with POU4F2 (via C-terminus) isoform 1. Interacts with POU3F2. Interacts with POU4F3. Interacts (via N-terminal domain) with MLIP; the interaction represses ISL1 transactivator activity. Interacts with GCN5/KAT2A. Interactions of ISL1 with MLIP1 or KAT2A may be mutually exclusive (By similarity).</text>
</comment>
<comment type="interaction">
    <interactant intactId="EBI-3906896">
        <id>P61371</id>
    </interactant>
    <interactant intactId="EBI-11979761">
        <id>Q86U70-2</id>
        <label>LDB1</label>
    </interactant>
    <organismsDiffer>false</organismsDiffer>
    <experiments>7</experiments>
</comment>
<comment type="interaction">
    <interactant intactId="EBI-3906896">
        <id>P61371</id>
    </interactant>
    <interactant intactId="EBI-2865388">
        <id>Q969G2</id>
        <label>LHX4</label>
    </interactant>
    <organismsDiffer>false</organismsDiffer>
    <experiments>4</experiments>
</comment>
<comment type="interaction">
    <interactant intactId="EBI-3906896">
        <id>P61371</id>
    </interactant>
    <interactant intactId="EBI-744719">
        <id>Q9BWG4</id>
        <label>SSBP4</label>
    </interactant>
    <organismsDiffer>false</organismsDiffer>
    <experiments>4</experiments>
</comment>
<comment type="interaction">
    <interactant intactId="EBI-3906896">
        <id>P61371</id>
    </interactant>
    <interactant intactId="EBI-2682386">
        <id>Q96PV0</id>
        <label>SYNGAP1</label>
    </interactant>
    <organismsDiffer>false</organismsDiffer>
    <experiments>8</experiments>
</comment>
<comment type="interaction">
    <interactant intactId="EBI-3906896">
        <id>P61371</id>
    </interactant>
    <interactant intactId="EBI-10269136">
        <id>Q8NB15</id>
        <label>ZNF511</label>
    </interactant>
    <organismsDiffer>false</organismsDiffer>
    <experiments>7</experiments>
</comment>
<comment type="subcellular location">
    <subcellularLocation>
        <location evidence="2">Nucleus</location>
    </subcellularLocation>
</comment>
<comment type="tissue specificity">
    <text evidence="8">Expressed in subsets of neurons of the adrenal medulla and dorsal root ganglion, inner nuclear and ganglion cell layers in the retina, the pineal and some regions of the brain.</text>
</comment>
<comment type="developmental stage">
    <text evidence="7">Expressed in the forming heart in the stage 9 embryo, in the myocardial trough, and then at stages 10 to 11, in the nondifferentiated mesodermal cells at the venous and arterial poles, as well as cells of the dorsal coelomic wall and ruptured mesocardium (at protein level).</text>
</comment>
<comment type="PTM">
    <text evidence="2">Ubiquitinated probably by WWP1 E3 ubiquitin ligase; ubiquitination is followed by protein degradation.</text>
</comment>
<comment type="PTM">
    <text evidence="2">Phosphorylated.</text>
</comment>
<proteinExistence type="evidence at protein level"/>
<dbReference type="EMBL" id="S70721">
    <property type="protein sequence ID" value="AAD14064.1"/>
    <property type="molecule type" value="mRNA"/>
</dbReference>
<dbReference type="EMBL" id="U07559">
    <property type="protein sequence ID" value="AAA81946.1"/>
    <property type="molecule type" value="mRNA"/>
</dbReference>
<dbReference type="EMBL" id="BC031213">
    <property type="protein sequence ID" value="AAH31213.1"/>
    <property type="molecule type" value="mRNA"/>
</dbReference>
<dbReference type="CCDS" id="CCDS43314.1"/>
<dbReference type="PIR" id="I53277">
    <property type="entry name" value="I53277"/>
</dbReference>
<dbReference type="RefSeq" id="NP_002193.2">
    <property type="nucleotide sequence ID" value="NM_002202.3"/>
</dbReference>
<dbReference type="SMR" id="P61371"/>
<dbReference type="BioGRID" id="109877">
    <property type="interactions" value="36"/>
</dbReference>
<dbReference type="CORUM" id="P61371"/>
<dbReference type="FunCoup" id="P61371">
    <property type="interactions" value="2125"/>
</dbReference>
<dbReference type="IntAct" id="P61371">
    <property type="interactions" value="21"/>
</dbReference>
<dbReference type="MINT" id="P61371"/>
<dbReference type="STRING" id="9606.ENSP00000230658"/>
<dbReference type="GlyGen" id="P61371">
    <property type="glycosylation" value="1 site, 1 O-linked glycan (1 site)"/>
</dbReference>
<dbReference type="iPTMnet" id="P61371"/>
<dbReference type="PhosphoSitePlus" id="P61371"/>
<dbReference type="BioMuta" id="ISL1"/>
<dbReference type="DMDM" id="47606423"/>
<dbReference type="jPOST" id="P61371"/>
<dbReference type="MassIVE" id="P61371"/>
<dbReference type="PaxDb" id="9606-ENSP00000230658"/>
<dbReference type="PeptideAtlas" id="P61371"/>
<dbReference type="ProteomicsDB" id="57299"/>
<dbReference type="Pumba" id="P61371"/>
<dbReference type="Antibodypedia" id="23291">
    <property type="antibodies" value="612 antibodies from 37 providers"/>
</dbReference>
<dbReference type="DNASU" id="3670"/>
<dbReference type="Ensembl" id="ENST00000230658.12">
    <property type="protein sequence ID" value="ENSP00000230658.7"/>
    <property type="gene ID" value="ENSG00000016082.15"/>
</dbReference>
<dbReference type="GeneID" id="3670"/>
<dbReference type="KEGG" id="hsa:3670"/>
<dbReference type="MANE-Select" id="ENST00000230658.12">
    <property type="protein sequence ID" value="ENSP00000230658.7"/>
    <property type="RefSeq nucleotide sequence ID" value="NM_002202.3"/>
    <property type="RefSeq protein sequence ID" value="NP_002193.2"/>
</dbReference>
<dbReference type="UCSC" id="uc003jor.4">
    <property type="organism name" value="human"/>
</dbReference>
<dbReference type="AGR" id="HGNC:6132"/>
<dbReference type="CTD" id="3670"/>
<dbReference type="DisGeNET" id="3670"/>
<dbReference type="GeneCards" id="ISL1"/>
<dbReference type="HGNC" id="HGNC:6132">
    <property type="gene designation" value="ISL1"/>
</dbReference>
<dbReference type="HPA" id="ENSG00000016082">
    <property type="expression patterns" value="Tissue enhanced (retina, seminal vesicle, vagina)"/>
</dbReference>
<dbReference type="MalaCards" id="ISL1"/>
<dbReference type="MIM" id="600366">
    <property type="type" value="gene"/>
</dbReference>
<dbReference type="neXtProt" id="NX_P61371"/>
<dbReference type="OpenTargets" id="ENSG00000016082"/>
<dbReference type="Orphanet" id="93930">
    <property type="disease" value="Bladder exstrophy"/>
</dbReference>
<dbReference type="PharmGKB" id="PA29932"/>
<dbReference type="VEuPathDB" id="HostDB:ENSG00000016082"/>
<dbReference type="eggNOG" id="KOG0490">
    <property type="taxonomic scope" value="Eukaryota"/>
</dbReference>
<dbReference type="GeneTree" id="ENSGT00940000153731"/>
<dbReference type="InParanoid" id="P61371"/>
<dbReference type="OMA" id="SPMHGNR"/>
<dbReference type="OrthoDB" id="125004at2759"/>
<dbReference type="PAN-GO" id="P61371">
    <property type="GO annotations" value="6 GO annotations based on evolutionary models"/>
</dbReference>
<dbReference type="PhylomeDB" id="P61371"/>
<dbReference type="TreeFam" id="TF315442"/>
<dbReference type="PathwayCommons" id="P61371"/>
<dbReference type="Reactome" id="R-HSA-400511">
    <property type="pathway name" value="Synthesis, secretion, and inactivation of Glucose-dependent Insulinotropic Polypeptide (GIP)"/>
</dbReference>
<dbReference type="Reactome" id="R-HSA-9010553">
    <property type="pathway name" value="Regulation of expression of SLITs and ROBOs"/>
</dbReference>
<dbReference type="Reactome" id="R-HSA-9733709">
    <property type="pathway name" value="Cardiogenesis"/>
</dbReference>
<dbReference type="SignaLink" id="P61371"/>
<dbReference type="SIGNOR" id="P61371"/>
<dbReference type="BioGRID-ORCS" id="3670">
    <property type="hits" value="29 hits in 1172 CRISPR screens"/>
</dbReference>
<dbReference type="ChiTaRS" id="ISL1">
    <property type="organism name" value="human"/>
</dbReference>
<dbReference type="GeneWiki" id="ISL1"/>
<dbReference type="GenomeRNAi" id="3670"/>
<dbReference type="Pharos" id="P61371">
    <property type="development level" value="Tbio"/>
</dbReference>
<dbReference type="PRO" id="PR:P61371"/>
<dbReference type="Proteomes" id="UP000005640">
    <property type="component" value="Chromosome 5"/>
</dbReference>
<dbReference type="RNAct" id="P61371">
    <property type="molecule type" value="protein"/>
</dbReference>
<dbReference type="Bgee" id="ENSG00000016082">
    <property type="expression patterns" value="Expressed in secondary oocyte and 99 other cell types or tissues"/>
</dbReference>
<dbReference type="ExpressionAtlas" id="P61371">
    <property type="expression patterns" value="baseline and differential"/>
</dbReference>
<dbReference type="GO" id="GO:0000785">
    <property type="term" value="C:chromatin"/>
    <property type="evidence" value="ECO:0000247"/>
    <property type="project" value="NTNU_SB"/>
</dbReference>
<dbReference type="GO" id="GO:0005737">
    <property type="term" value="C:cytoplasm"/>
    <property type="evidence" value="ECO:0000303"/>
    <property type="project" value="BHF-UCL"/>
</dbReference>
<dbReference type="GO" id="GO:0005634">
    <property type="term" value="C:nucleus"/>
    <property type="evidence" value="ECO:0000318"/>
    <property type="project" value="GO_Central"/>
</dbReference>
<dbReference type="GO" id="GO:0005667">
    <property type="term" value="C:transcription regulator complex"/>
    <property type="evidence" value="ECO:0007669"/>
    <property type="project" value="Ensembl"/>
</dbReference>
<dbReference type="GO" id="GO:0043425">
    <property type="term" value="F:bHLH transcription factor binding"/>
    <property type="evidence" value="ECO:0000353"/>
    <property type="project" value="BHF-UCL"/>
</dbReference>
<dbReference type="GO" id="GO:0000987">
    <property type="term" value="F:cis-regulatory region sequence-specific DNA binding"/>
    <property type="evidence" value="ECO:0000318"/>
    <property type="project" value="GO_Central"/>
</dbReference>
<dbReference type="GO" id="GO:0001046">
    <property type="term" value="F:core promoter sequence-specific DNA binding"/>
    <property type="evidence" value="ECO:0007669"/>
    <property type="project" value="Ensembl"/>
</dbReference>
<dbReference type="GO" id="GO:0001228">
    <property type="term" value="F:DNA-binding transcription activator activity, RNA polymerase II-specific"/>
    <property type="evidence" value="ECO:0007669"/>
    <property type="project" value="Ensembl"/>
</dbReference>
<dbReference type="GO" id="GO:0000981">
    <property type="term" value="F:DNA-binding transcription factor activity, RNA polymerase II-specific"/>
    <property type="evidence" value="ECO:0000314"/>
    <property type="project" value="BHF-UCL"/>
</dbReference>
<dbReference type="GO" id="GO:0030274">
    <property type="term" value="F:LIM domain binding"/>
    <property type="evidence" value="ECO:0007669"/>
    <property type="project" value="Ensembl"/>
</dbReference>
<dbReference type="GO" id="GO:0046872">
    <property type="term" value="F:metal ion binding"/>
    <property type="evidence" value="ECO:0007669"/>
    <property type="project" value="UniProtKB-KW"/>
</dbReference>
<dbReference type="GO" id="GO:0030331">
    <property type="term" value="F:nuclear estrogen receptor binding"/>
    <property type="evidence" value="ECO:0000250"/>
    <property type="project" value="BHF-UCL"/>
</dbReference>
<dbReference type="GO" id="GO:0016922">
    <property type="term" value="F:nuclear receptor binding"/>
    <property type="evidence" value="ECO:0000250"/>
    <property type="project" value="BHF-UCL"/>
</dbReference>
<dbReference type="GO" id="GO:1990841">
    <property type="term" value="F:promoter-specific chromatin binding"/>
    <property type="evidence" value="ECO:0000250"/>
    <property type="project" value="UniProtKB"/>
</dbReference>
<dbReference type="GO" id="GO:0000978">
    <property type="term" value="F:RNA polymerase II cis-regulatory region sequence-specific DNA binding"/>
    <property type="evidence" value="ECO:0000314"/>
    <property type="project" value="BHF-UCL"/>
</dbReference>
<dbReference type="GO" id="GO:0061629">
    <property type="term" value="F:RNA polymerase II-specific DNA-binding transcription factor binding"/>
    <property type="evidence" value="ECO:0000353"/>
    <property type="project" value="BHF-UCL"/>
</dbReference>
<dbReference type="GO" id="GO:1990837">
    <property type="term" value="F:sequence-specific double-stranded DNA binding"/>
    <property type="evidence" value="ECO:0000314"/>
    <property type="project" value="ARUK-UCL"/>
</dbReference>
<dbReference type="GO" id="GO:0060413">
    <property type="term" value="P:atrial septum morphogenesis"/>
    <property type="evidence" value="ECO:0000250"/>
    <property type="project" value="BHF-UCL"/>
</dbReference>
<dbReference type="GO" id="GO:0031103">
    <property type="term" value="P:axon regeneration"/>
    <property type="evidence" value="ECO:0007669"/>
    <property type="project" value="Ensembl"/>
</dbReference>
<dbReference type="GO" id="GO:0007409">
    <property type="term" value="P:axonogenesis"/>
    <property type="evidence" value="ECO:0000318"/>
    <property type="project" value="GO_Central"/>
</dbReference>
<dbReference type="GO" id="GO:0060070">
    <property type="term" value="P:canonical Wnt signaling pathway"/>
    <property type="evidence" value="ECO:0007669"/>
    <property type="project" value="Ensembl"/>
</dbReference>
<dbReference type="GO" id="GO:0060913">
    <property type="term" value="P:cardiac cell fate determination"/>
    <property type="evidence" value="ECO:0000314"/>
    <property type="project" value="BHF-UCL"/>
</dbReference>
<dbReference type="GO" id="GO:0060379">
    <property type="term" value="P:cardiac muscle cell myoblast differentiation"/>
    <property type="evidence" value="ECO:0007669"/>
    <property type="project" value="Ensembl"/>
</dbReference>
<dbReference type="GO" id="GO:0003215">
    <property type="term" value="P:cardiac right ventricle morphogenesis"/>
    <property type="evidence" value="ECO:0000250"/>
    <property type="project" value="BHF-UCL"/>
</dbReference>
<dbReference type="GO" id="GO:0008283">
    <property type="term" value="P:cell population proliferation"/>
    <property type="evidence" value="ECO:0007669"/>
    <property type="project" value="Ensembl"/>
</dbReference>
<dbReference type="GO" id="GO:0071385">
    <property type="term" value="P:cellular response to glucocorticoid stimulus"/>
    <property type="evidence" value="ECO:0000250"/>
    <property type="project" value="BHF-UCL"/>
</dbReference>
<dbReference type="GO" id="GO:0071560">
    <property type="term" value="P:cellular response to transforming growth factor beta stimulus"/>
    <property type="evidence" value="ECO:0007669"/>
    <property type="project" value="Ensembl"/>
</dbReference>
<dbReference type="GO" id="GO:0003203">
    <property type="term" value="P:endocardial cushion morphogenesis"/>
    <property type="evidence" value="ECO:0000250"/>
    <property type="project" value="BHF-UCL"/>
</dbReference>
<dbReference type="GO" id="GO:0007507">
    <property type="term" value="P:heart development"/>
    <property type="evidence" value="ECO:0000250"/>
    <property type="project" value="UniProtKB"/>
</dbReference>
<dbReference type="GO" id="GO:0060384">
    <property type="term" value="P:innervation"/>
    <property type="evidence" value="ECO:0000250"/>
    <property type="project" value="BHF-UCL"/>
</dbReference>
<dbReference type="GO" id="GO:0048762">
    <property type="term" value="P:mesenchymal cell differentiation"/>
    <property type="evidence" value="ECO:0000250"/>
    <property type="project" value="BHF-UCL"/>
</dbReference>
<dbReference type="GO" id="GO:0090090">
    <property type="term" value="P:negative regulation of canonical Wnt signaling pathway"/>
    <property type="evidence" value="ECO:0007669"/>
    <property type="project" value="Ensembl"/>
</dbReference>
<dbReference type="GO" id="GO:0050680">
    <property type="term" value="P:negative regulation of epithelial cell proliferation"/>
    <property type="evidence" value="ECO:0007669"/>
    <property type="project" value="Ensembl"/>
</dbReference>
<dbReference type="GO" id="GO:0050728">
    <property type="term" value="P:negative regulation of inflammatory response"/>
    <property type="evidence" value="ECO:0000250"/>
    <property type="project" value="BHF-UCL"/>
</dbReference>
<dbReference type="GO" id="GO:0033147">
    <property type="term" value="P:negative regulation of intracellular estrogen receptor signaling pathway"/>
    <property type="evidence" value="ECO:0000250"/>
    <property type="project" value="BHF-UCL"/>
</dbReference>
<dbReference type="GO" id="GO:0072201">
    <property type="term" value="P:negative regulation of mesenchymal cell proliferation"/>
    <property type="evidence" value="ECO:0007669"/>
    <property type="project" value="Ensembl"/>
</dbReference>
<dbReference type="GO" id="GO:0043524">
    <property type="term" value="P:negative regulation of neuron apoptotic process"/>
    <property type="evidence" value="ECO:0000250"/>
    <property type="project" value="BHF-UCL"/>
</dbReference>
<dbReference type="GO" id="GO:0045665">
    <property type="term" value="P:negative regulation of neuron differentiation"/>
    <property type="evidence" value="ECO:0007669"/>
    <property type="project" value="Ensembl"/>
</dbReference>
<dbReference type="GO" id="GO:0031333">
    <property type="term" value="P:negative regulation of protein-containing complex assembly"/>
    <property type="evidence" value="ECO:0000250"/>
    <property type="project" value="BHF-UCL"/>
</dbReference>
<dbReference type="GO" id="GO:0000122">
    <property type="term" value="P:negative regulation of transcription by RNA polymerase II"/>
    <property type="evidence" value="ECO:0000250"/>
    <property type="project" value="BHF-UCL"/>
</dbReference>
<dbReference type="GO" id="GO:0001755">
    <property type="term" value="P:neural crest cell migration"/>
    <property type="evidence" value="ECO:0007669"/>
    <property type="project" value="Ensembl"/>
</dbReference>
<dbReference type="GO" id="GO:0048665">
    <property type="term" value="P:neuron fate specification"/>
    <property type="evidence" value="ECO:0000250"/>
    <property type="project" value="BHF-UCL"/>
</dbReference>
<dbReference type="GO" id="GO:0003151">
    <property type="term" value="P:outflow tract morphogenesis"/>
    <property type="evidence" value="ECO:0000250"/>
    <property type="project" value="BHF-UCL"/>
</dbReference>
<dbReference type="GO" id="GO:0003148">
    <property type="term" value="P:outflow tract septum morphogenesis"/>
    <property type="evidence" value="ECO:0000250"/>
    <property type="project" value="BHF-UCL"/>
</dbReference>
<dbReference type="GO" id="GO:0031016">
    <property type="term" value="P:pancreas development"/>
    <property type="evidence" value="ECO:0000250"/>
    <property type="project" value="BHF-UCL"/>
</dbReference>
<dbReference type="GO" id="GO:0048936">
    <property type="term" value="P:peripheral nervous system neuron axonogenesis"/>
    <property type="evidence" value="ECO:0000250"/>
    <property type="project" value="BHF-UCL"/>
</dbReference>
<dbReference type="GO" id="GO:0060037">
    <property type="term" value="P:pharyngeal system development"/>
    <property type="evidence" value="ECO:0000250"/>
    <property type="project" value="BHF-UCL"/>
</dbReference>
<dbReference type="GO" id="GO:0021983">
    <property type="term" value="P:pituitary gland development"/>
    <property type="evidence" value="ECO:0007669"/>
    <property type="project" value="Ensembl"/>
</dbReference>
<dbReference type="GO" id="GO:0045766">
    <property type="term" value="P:positive regulation of angiogenesis"/>
    <property type="evidence" value="ECO:0000250"/>
    <property type="project" value="BHF-UCL"/>
</dbReference>
<dbReference type="GO" id="GO:0090280">
    <property type="term" value="P:positive regulation of calcium ion import"/>
    <property type="evidence" value="ECO:0007669"/>
    <property type="project" value="Ensembl"/>
</dbReference>
<dbReference type="GO" id="GO:0045597">
    <property type="term" value="P:positive regulation of cell differentiation"/>
    <property type="evidence" value="ECO:0000250"/>
    <property type="project" value="UniProtKB"/>
</dbReference>
<dbReference type="GO" id="GO:0008284">
    <property type="term" value="P:positive regulation of cell population proliferation"/>
    <property type="evidence" value="ECO:0007669"/>
    <property type="project" value="Ensembl"/>
</dbReference>
<dbReference type="GO" id="GO:0010718">
    <property type="term" value="P:positive regulation of epithelial to mesenchymal transition"/>
    <property type="evidence" value="ECO:0007669"/>
    <property type="project" value="Ensembl"/>
</dbReference>
<dbReference type="GO" id="GO:0071657">
    <property type="term" value="P:positive regulation of granulocyte colony-stimulating factor production"/>
    <property type="evidence" value="ECO:0000250"/>
    <property type="project" value="BHF-UCL"/>
</dbReference>
<dbReference type="GO" id="GO:0032725">
    <property type="term" value="P:positive regulation of granulocyte macrophage colony-stimulating factor production"/>
    <property type="evidence" value="ECO:0000250"/>
    <property type="project" value="BHF-UCL"/>
</dbReference>
<dbReference type="GO" id="GO:0032024">
    <property type="term" value="P:positive regulation of insulin secretion"/>
    <property type="evidence" value="ECO:0000314"/>
    <property type="project" value="BHF-UCL"/>
</dbReference>
<dbReference type="GO" id="GO:0032730">
    <property type="term" value="P:positive regulation of interleukin-1 alpha production"/>
    <property type="evidence" value="ECO:0000250"/>
    <property type="project" value="BHF-UCL"/>
</dbReference>
<dbReference type="GO" id="GO:0032731">
    <property type="term" value="P:positive regulation of interleukin-1 beta production"/>
    <property type="evidence" value="ECO:0000250"/>
    <property type="project" value="BHF-UCL"/>
</dbReference>
<dbReference type="GO" id="GO:0032735">
    <property type="term" value="P:positive regulation of interleukin-12 production"/>
    <property type="evidence" value="ECO:0000250"/>
    <property type="project" value="BHF-UCL"/>
</dbReference>
<dbReference type="GO" id="GO:0032755">
    <property type="term" value="P:positive regulation of interleukin-6 production"/>
    <property type="evidence" value="ECO:0000250"/>
    <property type="project" value="BHF-UCL"/>
</dbReference>
<dbReference type="GO" id="GO:1901258">
    <property type="term" value="P:positive regulation of macrophage colony-stimulating factor production"/>
    <property type="evidence" value="ECO:0000250"/>
    <property type="project" value="BHF-UCL"/>
</dbReference>
<dbReference type="GO" id="GO:0045880">
    <property type="term" value="P:positive regulation of smoothened signaling pathway"/>
    <property type="evidence" value="ECO:0007669"/>
    <property type="project" value="Ensembl"/>
</dbReference>
<dbReference type="GO" id="GO:0045944">
    <property type="term" value="P:positive regulation of transcription by RNA polymerase II"/>
    <property type="evidence" value="ECO:0000316"/>
    <property type="project" value="ParkinsonsUK-UCL"/>
</dbReference>
<dbReference type="GO" id="GO:0032760">
    <property type="term" value="P:positive regulation of tumor necrosis factor production"/>
    <property type="evidence" value="ECO:0000250"/>
    <property type="project" value="BHF-UCL"/>
</dbReference>
<dbReference type="GO" id="GO:2000676">
    <property type="term" value="P:positive regulation of type B pancreatic cell apoptotic process"/>
    <property type="evidence" value="ECO:0007669"/>
    <property type="project" value="Ensembl"/>
</dbReference>
<dbReference type="GO" id="GO:0032729">
    <property type="term" value="P:positive regulation of type II interferon production"/>
    <property type="evidence" value="ECO:0000250"/>
    <property type="project" value="BHF-UCL"/>
</dbReference>
<dbReference type="GO" id="GO:0010575">
    <property type="term" value="P:positive regulation of vascular endothelial growth factor production"/>
    <property type="evidence" value="ECO:0000250"/>
    <property type="project" value="BHF-UCL"/>
</dbReference>
<dbReference type="GO" id="GO:0086091">
    <property type="term" value="P:regulation of heart rate by cardiac conduction"/>
    <property type="evidence" value="ECO:0000250"/>
    <property type="project" value="BHF-UCL"/>
</dbReference>
<dbReference type="GO" id="GO:0003266">
    <property type="term" value="P:regulation of secondary heart field cardioblast proliferation"/>
    <property type="evidence" value="ECO:0007669"/>
    <property type="project" value="Ensembl"/>
</dbReference>
<dbReference type="GO" id="GO:0031290">
    <property type="term" value="P:retinal ganglion cell axon guidance"/>
    <property type="evidence" value="ECO:0007669"/>
    <property type="project" value="Ensembl"/>
</dbReference>
<dbReference type="GO" id="GO:0003139">
    <property type="term" value="P:secondary heart field specification"/>
    <property type="evidence" value="ECO:0000315"/>
    <property type="project" value="BHF-UCL"/>
</dbReference>
<dbReference type="GO" id="GO:0048880">
    <property type="term" value="P:sensory system development"/>
    <property type="evidence" value="ECO:0000250"/>
    <property type="project" value="BHF-UCL"/>
</dbReference>
<dbReference type="GO" id="GO:0060931">
    <property type="term" value="P:sinoatrial node cell development"/>
    <property type="evidence" value="ECO:0000250"/>
    <property type="project" value="BHF-UCL"/>
</dbReference>
<dbReference type="GO" id="GO:0021520">
    <property type="term" value="P:spinal cord motor neuron cell fate specification"/>
    <property type="evidence" value="ECO:0007669"/>
    <property type="project" value="Ensembl"/>
</dbReference>
<dbReference type="GO" id="GO:0021522">
    <property type="term" value="P:spinal cord motor neuron differentiation"/>
    <property type="evidence" value="ECO:0000250"/>
    <property type="project" value="BHF-UCL"/>
</dbReference>
<dbReference type="GO" id="GO:0006366">
    <property type="term" value="P:transcription by RNA polymerase II"/>
    <property type="evidence" value="ECO:0007669"/>
    <property type="project" value="Ensembl"/>
</dbReference>
<dbReference type="GO" id="GO:0021559">
    <property type="term" value="P:trigeminal nerve development"/>
    <property type="evidence" value="ECO:0000250"/>
    <property type="project" value="BHF-UCL"/>
</dbReference>
<dbReference type="GO" id="GO:0055010">
    <property type="term" value="P:ventricular cardiac muscle tissue morphogenesis"/>
    <property type="evidence" value="ECO:0000250"/>
    <property type="project" value="BHF-UCL"/>
</dbReference>
<dbReference type="GO" id="GO:0021524">
    <property type="term" value="P:visceral motor neuron differentiation"/>
    <property type="evidence" value="ECO:0007669"/>
    <property type="project" value="Ensembl"/>
</dbReference>
<dbReference type="CDD" id="cd00086">
    <property type="entry name" value="homeodomain"/>
    <property type="match status" value="1"/>
</dbReference>
<dbReference type="CDD" id="cd09366">
    <property type="entry name" value="LIM1_Isl"/>
    <property type="match status" value="1"/>
</dbReference>
<dbReference type="CDD" id="cd09374">
    <property type="entry name" value="LIM2_Isl"/>
    <property type="match status" value="1"/>
</dbReference>
<dbReference type="FunFam" id="2.10.110.10:FF:000034">
    <property type="entry name" value="Insulin gene enhancer protein ISL"/>
    <property type="match status" value="1"/>
</dbReference>
<dbReference type="FunFam" id="1.10.10.60:FF:000041">
    <property type="entry name" value="insulin gene enhancer protein ISL-1"/>
    <property type="match status" value="1"/>
</dbReference>
<dbReference type="FunFam" id="2.10.110.10:FF:000056">
    <property type="entry name" value="insulin gene enhancer protein ISL-1"/>
    <property type="match status" value="1"/>
</dbReference>
<dbReference type="Gene3D" id="2.10.110.10">
    <property type="entry name" value="Cysteine Rich Protein"/>
    <property type="match status" value="2"/>
</dbReference>
<dbReference type="Gene3D" id="1.10.10.60">
    <property type="entry name" value="Homeodomain-like"/>
    <property type="match status" value="1"/>
</dbReference>
<dbReference type="InterPro" id="IPR001356">
    <property type="entry name" value="HD"/>
</dbReference>
<dbReference type="InterPro" id="IPR017970">
    <property type="entry name" value="Homeobox_CS"/>
</dbReference>
<dbReference type="InterPro" id="IPR009057">
    <property type="entry name" value="Homeodomain-like_sf"/>
</dbReference>
<dbReference type="InterPro" id="IPR047169">
    <property type="entry name" value="ISL1/2-like"/>
</dbReference>
<dbReference type="InterPro" id="IPR047244">
    <property type="entry name" value="ISL1/2-like_LIM1"/>
</dbReference>
<dbReference type="InterPro" id="IPR001781">
    <property type="entry name" value="Znf_LIM"/>
</dbReference>
<dbReference type="PANTHER" id="PTHR24204">
    <property type="entry name" value="INSULIN GENE ENHANCER PROTEIN"/>
    <property type="match status" value="1"/>
</dbReference>
<dbReference type="PANTHER" id="PTHR24204:SF4">
    <property type="entry name" value="INSULIN GENE ENHANCER PROTEIN ISL-1"/>
    <property type="match status" value="1"/>
</dbReference>
<dbReference type="Pfam" id="PF00046">
    <property type="entry name" value="Homeodomain"/>
    <property type="match status" value="1"/>
</dbReference>
<dbReference type="Pfam" id="PF00412">
    <property type="entry name" value="LIM"/>
    <property type="match status" value="2"/>
</dbReference>
<dbReference type="SMART" id="SM00389">
    <property type="entry name" value="HOX"/>
    <property type="match status" value="1"/>
</dbReference>
<dbReference type="SMART" id="SM00132">
    <property type="entry name" value="LIM"/>
    <property type="match status" value="2"/>
</dbReference>
<dbReference type="SUPFAM" id="SSF57716">
    <property type="entry name" value="Glucocorticoid receptor-like (DNA-binding domain)"/>
    <property type="match status" value="2"/>
</dbReference>
<dbReference type="SUPFAM" id="SSF46689">
    <property type="entry name" value="Homeodomain-like"/>
    <property type="match status" value="1"/>
</dbReference>
<dbReference type="PROSITE" id="PS00027">
    <property type="entry name" value="HOMEOBOX_1"/>
    <property type="match status" value="1"/>
</dbReference>
<dbReference type="PROSITE" id="PS50071">
    <property type="entry name" value="HOMEOBOX_2"/>
    <property type="match status" value="1"/>
</dbReference>
<dbReference type="PROSITE" id="PS00478">
    <property type="entry name" value="LIM_DOMAIN_1"/>
    <property type="match status" value="2"/>
</dbReference>
<dbReference type="PROSITE" id="PS50023">
    <property type="entry name" value="LIM_DOMAIN_2"/>
    <property type="match status" value="2"/>
</dbReference>
<sequence length="349" mass="39036">MGDMGDPPKKKRLISLCVGCGNQIHDQYILRVSPDLEWHAACLKCAECNQYLDESCTCFVRDGKTYCKRDYIRLYGIKCAKCSIGFSKNDFVMRARSKVYHIECFRCVACSRQLIPGDEFALREDGLFCRADHDVVERASLGAGDPLSPLHPARPLQMAAEPISARQPALRPHVHKQPEKTTRVRTVLNEKQLHTLRTCYAANPRPDALMKEQLVEMTGLSPRVIRVWFQNKRCKDKKRSIMMKQLQQQQPNDKTNIQGMTGTPMVAASPERHDGGLQANPVEVQSYQPPWKVLSDFALQSDIDQPAFQQLVNFSEGGPGSNSTGSEVASMSSQLPDTPNSMVASPIEA</sequence>